<feature type="signal peptide" evidence="2 3">
    <location>
        <begin position="1"/>
        <end position="22"/>
    </location>
</feature>
<feature type="chain" id="PRO_0000015194" description="Immunoglobulin kappa chain variable 9-120">
    <location>
        <begin position="23"/>
        <end position="130"/>
    </location>
</feature>
<feature type="region of interest" description="Framework-1">
    <location>
        <begin position="23"/>
        <end position="45"/>
    </location>
</feature>
<feature type="region of interest" description="Complementarity-determining-1">
    <location>
        <begin position="46"/>
        <end position="56"/>
    </location>
</feature>
<feature type="region of interest" description="Framework-2">
    <location>
        <begin position="57"/>
        <end position="71"/>
    </location>
</feature>
<feature type="region of interest" description="Complementarity-determining-2">
    <location>
        <begin position="72"/>
        <end position="78"/>
    </location>
</feature>
<feature type="region of interest" description="Framework-3">
    <location>
        <begin position="79"/>
        <end position="110"/>
    </location>
</feature>
<feature type="region of interest" description="Complementarity-determining-3">
    <location>
        <begin position="111"/>
        <end position="119"/>
    </location>
</feature>
<feature type="region of interest" description="Framework-4">
    <location>
        <begin position="120"/>
        <end position="129"/>
    </location>
</feature>
<feature type="disulfide bond" evidence="1">
    <location>
        <begin position="45"/>
        <end position="110"/>
    </location>
</feature>
<feature type="sequence variant" description="In 25% of the molecules.">
    <location>
        <begin position="1"/>
        <end position="2"/>
    </location>
</feature>
<feature type="non-terminal residue">
    <location>
        <position position="130"/>
    </location>
</feature>
<sequence>MDMRAPAQIFGFLLLLFQGTRCDIQMTQSPSSLSASLGERVSLTCRASQDIGSSLNWLQQEPDGTIKRLIYATSSLDSGVPKRFSGSRSGSDYSLTISSLESEDFVDYYCLQYASSPWTFGGGTKLEIKR</sequence>
<name>KV5A7_MOUSE</name>
<dbReference type="PIR" id="A93211">
    <property type="entry name" value="KVMSM4"/>
</dbReference>
<dbReference type="PIR" id="PL0259">
    <property type="entry name" value="PL0259"/>
</dbReference>
<dbReference type="PIR" id="PL0260">
    <property type="entry name" value="PL0260"/>
</dbReference>
<dbReference type="PIR" id="PL0261">
    <property type="entry name" value="PL0261"/>
</dbReference>
<dbReference type="EMDB" id="EMD-26659"/>
<dbReference type="EMDB" id="EMD-27385"/>
<dbReference type="EMDB" id="EMD-28863"/>
<dbReference type="EMDB" id="EMD-32970"/>
<dbReference type="EMDB" id="EMD-32973"/>
<dbReference type="EMDB" id="EMD-32979"/>
<dbReference type="EMDB" id="EMD-32981"/>
<dbReference type="EMDB" id="EMD-32983"/>
<dbReference type="EMDB" id="EMD-32998"/>
<dbReference type="EMDB" id="EMD-32999"/>
<dbReference type="EMDB" id="EMD-33002"/>
<dbReference type="EMDB" id="EMD-33005"/>
<dbReference type="EMDB" id="EMD-33047"/>
<dbReference type="EMDB" id="EMD-33048"/>
<dbReference type="EMDB" id="EMD-33049"/>
<dbReference type="EMDB" id="EMD-36407"/>
<dbReference type="EMDB" id="EMD-37291"/>
<dbReference type="EMDB" id="EMD-37292"/>
<dbReference type="EMDB" id="EMD-40094"/>
<dbReference type="EMDB" id="EMD-40095"/>
<dbReference type="EMDB" id="EMD-9633"/>
<dbReference type="EMDB" id="EMD-9634"/>
<dbReference type="SMR" id="P01639"/>
<dbReference type="FunCoup" id="P01639">
    <property type="interactions" value="637"/>
</dbReference>
<dbReference type="CPTAC" id="non-CPTAC-3539"/>
<dbReference type="PeptideAtlas" id="P01639"/>
<dbReference type="ProteomicsDB" id="264812"/>
<dbReference type="AGR" id="MGI:3647784"/>
<dbReference type="MGI" id="MGI:3647784">
    <property type="gene designation" value="Igkv9-120"/>
</dbReference>
<dbReference type="InParanoid" id="P01639"/>
<dbReference type="PhylomeDB" id="P01639"/>
<dbReference type="ChiTaRS" id="Igkv9-120">
    <property type="organism name" value="mouse"/>
</dbReference>
<dbReference type="PRO" id="PR:P01639"/>
<dbReference type="Proteomes" id="UP000000589">
    <property type="component" value="Unplaced"/>
</dbReference>
<dbReference type="RNAct" id="P01639">
    <property type="molecule type" value="protein"/>
</dbReference>
<dbReference type="GO" id="GO:0019814">
    <property type="term" value="C:immunoglobulin complex"/>
    <property type="evidence" value="ECO:0007669"/>
    <property type="project" value="UniProtKB-KW"/>
</dbReference>
<dbReference type="GO" id="GO:0002250">
    <property type="term" value="P:adaptive immune response"/>
    <property type="evidence" value="ECO:0007669"/>
    <property type="project" value="UniProtKB-KW"/>
</dbReference>
<dbReference type="CDD" id="cd04980">
    <property type="entry name" value="IgV_L_kappa"/>
    <property type="match status" value="1"/>
</dbReference>
<dbReference type="FunFam" id="2.60.40.10:FF:000212">
    <property type="entry name" value="Immunoglobulin kappa chain variable 12-38"/>
    <property type="match status" value="1"/>
</dbReference>
<dbReference type="Gene3D" id="2.60.40.10">
    <property type="entry name" value="Immunoglobulins"/>
    <property type="match status" value="1"/>
</dbReference>
<dbReference type="InterPro" id="IPR007110">
    <property type="entry name" value="Ig-like_dom"/>
</dbReference>
<dbReference type="InterPro" id="IPR036179">
    <property type="entry name" value="Ig-like_dom_sf"/>
</dbReference>
<dbReference type="InterPro" id="IPR013783">
    <property type="entry name" value="Ig-like_fold"/>
</dbReference>
<dbReference type="InterPro" id="IPR003599">
    <property type="entry name" value="Ig_sub"/>
</dbReference>
<dbReference type="InterPro" id="IPR013106">
    <property type="entry name" value="Ig_V-set"/>
</dbReference>
<dbReference type="InterPro" id="IPR050150">
    <property type="entry name" value="IgV_Light_Chain"/>
</dbReference>
<dbReference type="PANTHER" id="PTHR23267">
    <property type="entry name" value="IMMUNOGLOBULIN LIGHT CHAIN"/>
    <property type="match status" value="1"/>
</dbReference>
<dbReference type="Pfam" id="PF07686">
    <property type="entry name" value="V-set"/>
    <property type="match status" value="1"/>
</dbReference>
<dbReference type="SMART" id="SM00409">
    <property type="entry name" value="IG"/>
    <property type="match status" value="1"/>
</dbReference>
<dbReference type="SMART" id="SM00406">
    <property type="entry name" value="IGv"/>
    <property type="match status" value="1"/>
</dbReference>
<dbReference type="SUPFAM" id="SSF48726">
    <property type="entry name" value="Immunoglobulin"/>
    <property type="match status" value="1"/>
</dbReference>
<dbReference type="PROSITE" id="PS50835">
    <property type="entry name" value="IG_LIKE"/>
    <property type="match status" value="1"/>
</dbReference>
<gene>
    <name evidence="5" type="primary">Igkv9-120</name>
    <name evidence="5" type="synonym">Gm5571</name>
</gene>
<proteinExistence type="evidence at protein level"/>
<evidence type="ECO:0000255" key="1">
    <source>
        <dbReference type="PROSITE-ProRule" id="PRU00114"/>
    </source>
</evidence>
<evidence type="ECO:0000269" key="2">
    <source>
    </source>
</evidence>
<evidence type="ECO:0000269" key="3">
    <source>
    </source>
</evidence>
<evidence type="ECO:0000305" key="4"/>
<evidence type="ECO:0000312" key="5">
    <source>
        <dbReference type="MGI" id="MGI:3647784"/>
    </source>
</evidence>
<comment type="miscellaneous">
    <text>This precursor was synthesized in a cell-free system directed by mRNA isolated from myeloma polysomes.</text>
</comment>
<comment type="miscellaneous">
    <text>This is a Bence-Jones protein.</text>
</comment>
<protein>
    <recommendedName>
        <fullName evidence="5">Immunoglobulin kappa chain variable 9-120</fullName>
    </recommendedName>
    <alternativeName>
        <fullName evidence="4">Ig kappa chain V-V region MOPC 41</fullName>
    </alternativeName>
</protein>
<reference key="1">
    <citation type="journal article" date="1979" name="Nature">
        <title>A kappa-immunoglobulin gene is formed by site-specific recombination without further somatic mutation.</title>
        <authorList>
            <person name="Seidman J.G."/>
            <person name="Max E.E."/>
            <person name="Leder P."/>
        </authorList>
    </citation>
    <scope>NUCLEOTIDE SEQUENCE</scope>
</reference>
<reference key="2">
    <citation type="journal article" date="1977" name="Proc. Natl. Acad. Sci. U.S.A.">
        <title>Amino acid sequence of the NH2-terminal extra piece segments of the precursors of mouse immunoglobulin lambda1-type and kappa-type light chains.</title>
        <authorList>
            <person name="Burstein Y."/>
            <person name="Schechter I."/>
        </authorList>
    </citation>
    <scope>PROTEIN SEQUENCE OF 1-33 (PRECURSOR PROTEIN)</scope>
</reference>
<reference key="3">
    <citation type="journal article" date="1967" name="Science">
        <title>Mechanism of antibody synthesis: size differences between mouse kappa chains.</title>
        <authorList>
            <person name="Gray W.R."/>
            <person name="Dreyer W.J."/>
            <person name="Hood L.E."/>
        </authorList>
    </citation>
    <scope>PROTEIN SEQUENCE OF 23-130</scope>
</reference>
<keyword id="KW-1064">Adaptive immunity</keyword>
<keyword id="KW-0086">Bence-Jones protein</keyword>
<keyword id="KW-0903">Direct protein sequencing</keyword>
<keyword id="KW-1015">Disulfide bond</keyword>
<keyword id="KW-0391">Immunity</keyword>
<keyword id="KW-1280">Immunoglobulin</keyword>
<keyword id="KW-1185">Reference proteome</keyword>
<keyword id="KW-0732">Signal</keyword>
<accession>P01639</accession>
<accession>P01640</accession>
<organism>
    <name type="scientific">Mus musculus</name>
    <name type="common">Mouse</name>
    <dbReference type="NCBI Taxonomy" id="10090"/>
    <lineage>
        <taxon>Eukaryota</taxon>
        <taxon>Metazoa</taxon>
        <taxon>Chordata</taxon>
        <taxon>Craniata</taxon>
        <taxon>Vertebrata</taxon>
        <taxon>Euteleostomi</taxon>
        <taxon>Mammalia</taxon>
        <taxon>Eutheria</taxon>
        <taxon>Euarchontoglires</taxon>
        <taxon>Glires</taxon>
        <taxon>Rodentia</taxon>
        <taxon>Myomorpha</taxon>
        <taxon>Muroidea</taxon>
        <taxon>Muridae</taxon>
        <taxon>Murinae</taxon>
        <taxon>Mus</taxon>
        <taxon>Mus</taxon>
    </lineage>
</organism>